<feature type="chain" id="PRO_0000232188" description="ATP-dependent RNA helicase DHH1">
    <location>
        <begin position="1"/>
        <end position="625"/>
    </location>
</feature>
<feature type="domain" description="Helicase ATP-binding" evidence="2">
    <location>
        <begin position="67"/>
        <end position="238"/>
    </location>
</feature>
<feature type="domain" description="Helicase C-terminal" evidence="3">
    <location>
        <begin position="248"/>
        <end position="408"/>
    </location>
</feature>
<feature type="region of interest" description="Disordered" evidence="4">
    <location>
        <begin position="1"/>
        <end position="34"/>
    </location>
</feature>
<feature type="region of interest" description="Disordered" evidence="4">
    <location>
        <begin position="416"/>
        <end position="625"/>
    </location>
</feature>
<feature type="short sequence motif" description="Q motif">
    <location>
        <begin position="36"/>
        <end position="64"/>
    </location>
</feature>
<feature type="short sequence motif" description="DEAD box">
    <location>
        <begin position="186"/>
        <end position="189"/>
    </location>
</feature>
<feature type="compositionally biased region" description="Low complexity" evidence="4">
    <location>
        <begin position="427"/>
        <end position="441"/>
    </location>
</feature>
<feature type="compositionally biased region" description="Low complexity" evidence="4">
    <location>
        <begin position="450"/>
        <end position="505"/>
    </location>
</feature>
<feature type="compositionally biased region" description="Low complexity" evidence="4">
    <location>
        <begin position="513"/>
        <end position="528"/>
    </location>
</feature>
<feature type="compositionally biased region" description="Low complexity" evidence="4">
    <location>
        <begin position="538"/>
        <end position="586"/>
    </location>
</feature>
<feature type="compositionally biased region" description="Gly residues" evidence="4">
    <location>
        <begin position="604"/>
        <end position="617"/>
    </location>
</feature>
<feature type="binding site" evidence="2">
    <location>
        <begin position="80"/>
        <end position="87"/>
    </location>
    <ligand>
        <name>ATP</name>
        <dbReference type="ChEBI" id="CHEBI:30616"/>
    </ligand>
</feature>
<sequence>MASSSTLLNDDWKQGLAAPPKDLRPQTEDVTATQGSRFEDFGLRRELLMGIYTAGFERPSPIQEQAIPMALTGRDILARAKNGTGKTASFIIPTLNRINTSLSHIQALILVPTRELALQTSQVCKTLGAHIPNLQVMITTGGTTLRDDILRLQQPVHILVGTPGRILDLGSKGIASLNKCGVFVMDEADKLLSEDFMPVIEQTLALCPQERQVMLFSATFPWTVKEFKDQHMVQPYEINLMDELTLKGVTQYYAYVEESQKVHCLNTLFSKLQINQSIIFCNSTNRVELLAKKVTELGYSCFYSHAKMQQAHRNRVFHDFRNGMTRNLVCSDLLTRGIDIQAVNVVINFDFPRTAESYLHRIGRSGRFGHLGLAISLLTLEDRHNLYRIESELGTEIAPIPAVIDPVLYVAPAMVEEERESPPPKPAAIAAPPAQQQPQQRQRQHPPVPSHQAAQQSPAAAPVQQQQQQQQQQQQQQQQQQPQYQQAYGQGPPQPQALFQQQPNSSPAPAPLPSYSQQAPTQAQGPAPVQSPPPAPSTQPQAPAQTPIQGQIPPTQPRAQQQGQQQPGQPGQAQGQSQPNRRPNTGGFRGNGRGQGHRGRGRGRGGQPGQPGAGAGAGQSQQAQA</sequence>
<comment type="function">
    <text evidence="1">ATP-dependent RNA helicase involved in mRNA turnover, and more specifically in mRNA decapping. Is involved in G1/S DNA-damage checkpoint recovery, probably through the regulation of the translational status of a subset of mRNAs. May also have a role in translation and mRNA nuclear export (By similarity).</text>
</comment>
<comment type="catalytic activity">
    <reaction>
        <text>ATP + H2O = ADP + phosphate + H(+)</text>
        <dbReference type="Rhea" id="RHEA:13065"/>
        <dbReference type="ChEBI" id="CHEBI:15377"/>
        <dbReference type="ChEBI" id="CHEBI:15378"/>
        <dbReference type="ChEBI" id="CHEBI:30616"/>
        <dbReference type="ChEBI" id="CHEBI:43474"/>
        <dbReference type="ChEBI" id="CHEBI:456216"/>
        <dbReference type="EC" id="3.6.4.13"/>
    </reaction>
</comment>
<comment type="subcellular location">
    <subcellularLocation>
        <location evidence="1">Cytoplasm</location>
        <location evidence="1">P-body</location>
    </subcellularLocation>
    <text evidence="1">Is concentrated in several cytoplasmic foci called P bodies (or cytoplasmic processing bodies) which represent sites of mRNA decapping and 5' to 3' exonucleotidic decay.</text>
</comment>
<comment type="domain">
    <text>The Q motif is unique to and characteristic of the DEAD box family of RNA helicases and controls ATP binding and hydrolysis.</text>
</comment>
<comment type="similarity">
    <text evidence="5">Belongs to the DEAD box helicase family. DDX6/DHH1 subfamily.</text>
</comment>
<gene>
    <name type="primary">DHH1</name>
    <name type="ordered locus">CNC06460</name>
</gene>
<keyword id="KW-0067">ATP-binding</keyword>
<keyword id="KW-0963">Cytoplasm</keyword>
<keyword id="KW-0347">Helicase</keyword>
<keyword id="KW-0378">Hydrolase</keyword>
<keyword id="KW-0507">mRNA processing</keyword>
<keyword id="KW-0509">mRNA transport</keyword>
<keyword id="KW-0547">Nucleotide-binding</keyword>
<keyword id="KW-1185">Reference proteome</keyword>
<keyword id="KW-0694">RNA-binding</keyword>
<keyword id="KW-0810">Translation regulation</keyword>
<keyword id="KW-0813">Transport</keyword>
<protein>
    <recommendedName>
        <fullName>ATP-dependent RNA helicase DHH1</fullName>
        <ecNumber>3.6.4.13</ecNumber>
    </recommendedName>
</protein>
<organism>
    <name type="scientific">Cryptococcus neoformans var. neoformans serotype D (strain JEC21 / ATCC MYA-565)</name>
    <name type="common">Filobasidiella neoformans</name>
    <dbReference type="NCBI Taxonomy" id="214684"/>
    <lineage>
        <taxon>Eukaryota</taxon>
        <taxon>Fungi</taxon>
        <taxon>Dikarya</taxon>
        <taxon>Basidiomycota</taxon>
        <taxon>Agaricomycotina</taxon>
        <taxon>Tremellomycetes</taxon>
        <taxon>Tremellales</taxon>
        <taxon>Cryptococcaceae</taxon>
        <taxon>Cryptococcus</taxon>
        <taxon>Cryptococcus neoformans species complex</taxon>
    </lineage>
</organism>
<reference key="1">
    <citation type="journal article" date="2005" name="Science">
        <title>The genome of the basidiomycetous yeast and human pathogen Cryptococcus neoformans.</title>
        <authorList>
            <person name="Loftus B.J."/>
            <person name="Fung E."/>
            <person name="Roncaglia P."/>
            <person name="Rowley D."/>
            <person name="Amedeo P."/>
            <person name="Bruno D."/>
            <person name="Vamathevan J."/>
            <person name="Miranda M."/>
            <person name="Anderson I.J."/>
            <person name="Fraser J.A."/>
            <person name="Allen J.E."/>
            <person name="Bosdet I.E."/>
            <person name="Brent M.R."/>
            <person name="Chiu R."/>
            <person name="Doering T.L."/>
            <person name="Donlin M.J."/>
            <person name="D'Souza C.A."/>
            <person name="Fox D.S."/>
            <person name="Grinberg V."/>
            <person name="Fu J."/>
            <person name="Fukushima M."/>
            <person name="Haas B.J."/>
            <person name="Huang J.C."/>
            <person name="Janbon G."/>
            <person name="Jones S.J.M."/>
            <person name="Koo H.L."/>
            <person name="Krzywinski M.I."/>
            <person name="Kwon-Chung K.J."/>
            <person name="Lengeler K.B."/>
            <person name="Maiti R."/>
            <person name="Marra M.A."/>
            <person name="Marra R.E."/>
            <person name="Mathewson C.A."/>
            <person name="Mitchell T.G."/>
            <person name="Pertea M."/>
            <person name="Riggs F.R."/>
            <person name="Salzberg S.L."/>
            <person name="Schein J.E."/>
            <person name="Shvartsbeyn A."/>
            <person name="Shin H."/>
            <person name="Shumway M."/>
            <person name="Specht C.A."/>
            <person name="Suh B.B."/>
            <person name="Tenney A."/>
            <person name="Utterback T.R."/>
            <person name="Wickes B.L."/>
            <person name="Wortman J.R."/>
            <person name="Wye N.H."/>
            <person name="Kronstad J.W."/>
            <person name="Lodge J.K."/>
            <person name="Heitman J."/>
            <person name="Davis R.W."/>
            <person name="Fraser C.M."/>
            <person name="Hyman R.W."/>
        </authorList>
    </citation>
    <scope>NUCLEOTIDE SEQUENCE [LARGE SCALE GENOMIC DNA]</scope>
    <source>
        <strain>JEC21 / ATCC MYA-565</strain>
    </source>
</reference>
<dbReference type="EC" id="3.6.4.13"/>
<dbReference type="EMBL" id="AE017343">
    <property type="protein sequence ID" value="AAW42594.1"/>
    <property type="molecule type" value="Genomic_DNA"/>
</dbReference>
<dbReference type="RefSeq" id="XP_569901.1">
    <property type="nucleotide sequence ID" value="XM_569901.1"/>
</dbReference>
<dbReference type="SMR" id="P0CQ80"/>
<dbReference type="FunCoup" id="P0CQ80">
    <property type="interactions" value="720"/>
</dbReference>
<dbReference type="STRING" id="214684.P0CQ80"/>
<dbReference type="PaxDb" id="214684-P0CQ80"/>
<dbReference type="EnsemblFungi" id="AAW42594">
    <property type="protein sequence ID" value="AAW42594"/>
    <property type="gene ID" value="CNC06460"/>
</dbReference>
<dbReference type="GeneID" id="3256118"/>
<dbReference type="KEGG" id="cne:CNC06460"/>
<dbReference type="VEuPathDB" id="FungiDB:CNC06460"/>
<dbReference type="eggNOG" id="KOG0326">
    <property type="taxonomic scope" value="Eukaryota"/>
</dbReference>
<dbReference type="HOGENOM" id="CLU_003041_30_2_1"/>
<dbReference type="InParanoid" id="P0CQ80"/>
<dbReference type="OMA" id="MNANPPF"/>
<dbReference type="OrthoDB" id="10265785at2759"/>
<dbReference type="Proteomes" id="UP000002149">
    <property type="component" value="Chromosome 3"/>
</dbReference>
<dbReference type="GO" id="GO:0010494">
    <property type="term" value="C:cytoplasmic stress granule"/>
    <property type="evidence" value="ECO:0000318"/>
    <property type="project" value="GO_Central"/>
</dbReference>
<dbReference type="GO" id="GO:0000932">
    <property type="term" value="C:P-body"/>
    <property type="evidence" value="ECO:0000318"/>
    <property type="project" value="GO_Central"/>
</dbReference>
<dbReference type="GO" id="GO:0005524">
    <property type="term" value="F:ATP binding"/>
    <property type="evidence" value="ECO:0007669"/>
    <property type="project" value="UniProtKB-KW"/>
</dbReference>
<dbReference type="GO" id="GO:0016887">
    <property type="term" value="F:ATP hydrolysis activity"/>
    <property type="evidence" value="ECO:0007669"/>
    <property type="project" value="RHEA"/>
</dbReference>
<dbReference type="GO" id="GO:0003729">
    <property type="term" value="F:mRNA binding"/>
    <property type="evidence" value="ECO:0000318"/>
    <property type="project" value="GO_Central"/>
</dbReference>
<dbReference type="GO" id="GO:0003724">
    <property type="term" value="F:RNA helicase activity"/>
    <property type="evidence" value="ECO:0007669"/>
    <property type="project" value="UniProtKB-EC"/>
</dbReference>
<dbReference type="GO" id="GO:0006397">
    <property type="term" value="P:mRNA processing"/>
    <property type="evidence" value="ECO:0007669"/>
    <property type="project" value="UniProtKB-KW"/>
</dbReference>
<dbReference type="GO" id="GO:0051028">
    <property type="term" value="P:mRNA transport"/>
    <property type="evidence" value="ECO:0007669"/>
    <property type="project" value="UniProtKB-KW"/>
</dbReference>
<dbReference type="GO" id="GO:0017148">
    <property type="term" value="P:negative regulation of translation"/>
    <property type="evidence" value="ECO:0000318"/>
    <property type="project" value="GO_Central"/>
</dbReference>
<dbReference type="GO" id="GO:0033962">
    <property type="term" value="P:P-body assembly"/>
    <property type="evidence" value="ECO:0000318"/>
    <property type="project" value="GO_Central"/>
</dbReference>
<dbReference type="GO" id="GO:0034063">
    <property type="term" value="P:stress granule assembly"/>
    <property type="evidence" value="ECO:0000318"/>
    <property type="project" value="GO_Central"/>
</dbReference>
<dbReference type="CDD" id="cd17940">
    <property type="entry name" value="DEADc_DDX6"/>
    <property type="match status" value="1"/>
</dbReference>
<dbReference type="CDD" id="cd18787">
    <property type="entry name" value="SF2_C_DEAD"/>
    <property type="match status" value="1"/>
</dbReference>
<dbReference type="FunFam" id="3.40.50.300:FF:000114">
    <property type="entry name" value="ATP-dependent RNA helicase DDX6"/>
    <property type="match status" value="1"/>
</dbReference>
<dbReference type="Gene3D" id="3.40.50.300">
    <property type="entry name" value="P-loop containing nucleotide triphosphate hydrolases"/>
    <property type="match status" value="2"/>
</dbReference>
<dbReference type="InterPro" id="IPR011545">
    <property type="entry name" value="DEAD/DEAH_box_helicase_dom"/>
</dbReference>
<dbReference type="InterPro" id="IPR014001">
    <property type="entry name" value="Helicase_ATP-bd"/>
</dbReference>
<dbReference type="InterPro" id="IPR001650">
    <property type="entry name" value="Helicase_C-like"/>
</dbReference>
<dbReference type="InterPro" id="IPR027417">
    <property type="entry name" value="P-loop_NTPase"/>
</dbReference>
<dbReference type="InterPro" id="IPR000629">
    <property type="entry name" value="RNA-helicase_DEAD-box_CS"/>
</dbReference>
<dbReference type="InterPro" id="IPR014014">
    <property type="entry name" value="RNA_helicase_DEAD_Q_motif"/>
</dbReference>
<dbReference type="PANTHER" id="PTHR47960">
    <property type="entry name" value="DEAD-BOX ATP-DEPENDENT RNA HELICASE 50"/>
    <property type="match status" value="1"/>
</dbReference>
<dbReference type="Pfam" id="PF00270">
    <property type="entry name" value="DEAD"/>
    <property type="match status" value="1"/>
</dbReference>
<dbReference type="Pfam" id="PF00271">
    <property type="entry name" value="Helicase_C"/>
    <property type="match status" value="1"/>
</dbReference>
<dbReference type="SMART" id="SM00487">
    <property type="entry name" value="DEXDc"/>
    <property type="match status" value="1"/>
</dbReference>
<dbReference type="SMART" id="SM00490">
    <property type="entry name" value="HELICc"/>
    <property type="match status" value="1"/>
</dbReference>
<dbReference type="SUPFAM" id="SSF52540">
    <property type="entry name" value="P-loop containing nucleoside triphosphate hydrolases"/>
    <property type="match status" value="1"/>
</dbReference>
<dbReference type="PROSITE" id="PS00039">
    <property type="entry name" value="DEAD_ATP_HELICASE"/>
    <property type="match status" value="1"/>
</dbReference>
<dbReference type="PROSITE" id="PS51192">
    <property type="entry name" value="HELICASE_ATP_BIND_1"/>
    <property type="match status" value="1"/>
</dbReference>
<dbReference type="PROSITE" id="PS51194">
    <property type="entry name" value="HELICASE_CTER"/>
    <property type="match status" value="1"/>
</dbReference>
<dbReference type="PROSITE" id="PS51195">
    <property type="entry name" value="Q_MOTIF"/>
    <property type="match status" value="1"/>
</dbReference>
<proteinExistence type="inferred from homology"/>
<name>DHH1_CRYNJ</name>
<accession>P0CQ80</accession>
<accession>Q55WR5</accession>
<accession>Q5KJI2</accession>
<evidence type="ECO:0000250" key="1"/>
<evidence type="ECO:0000255" key="2">
    <source>
        <dbReference type="PROSITE-ProRule" id="PRU00541"/>
    </source>
</evidence>
<evidence type="ECO:0000255" key="3">
    <source>
        <dbReference type="PROSITE-ProRule" id="PRU00542"/>
    </source>
</evidence>
<evidence type="ECO:0000256" key="4">
    <source>
        <dbReference type="SAM" id="MobiDB-lite"/>
    </source>
</evidence>
<evidence type="ECO:0000305" key="5"/>